<accession>P09347</accession>
<comment type="catalytic activity">
    <reaction evidence="2">
        <text>(1R,4R,5R)-5-hydroxycamphor + NAD(+) = (1R,4R)-bornane-2,5-dione + NADH + H(+)</text>
        <dbReference type="Rhea" id="RHEA:32879"/>
        <dbReference type="ChEBI" id="CHEBI:15378"/>
        <dbReference type="ChEBI" id="CHEBI:15392"/>
        <dbReference type="ChEBI" id="CHEBI:15398"/>
        <dbReference type="ChEBI" id="CHEBI:57540"/>
        <dbReference type="ChEBI" id="CHEBI:57945"/>
        <dbReference type="EC" id="1.1.1.327"/>
    </reaction>
</comment>
<comment type="cofactor">
    <cofactor evidence="1">
        <name>Zn(2+)</name>
        <dbReference type="ChEBI" id="CHEBI:29105"/>
    </cofactor>
    <text evidence="1">Binds 2 Zn(2+) ions per subunit.</text>
</comment>
<comment type="pathway">
    <text>Terpene metabolism; (R)-camphor degradation.</text>
</comment>
<comment type="induction">
    <text>By camphor.</text>
</comment>
<comment type="similarity">
    <text evidence="3">Belongs to the zinc-containing alcohol dehydrogenase family.</text>
</comment>
<feature type="chain" id="PRO_0000160826" description="5-exo-hydroxycamphor dehydrogenase">
    <location>
        <begin position="1"/>
        <end position="361"/>
    </location>
</feature>
<feature type="binding site" evidence="1">
    <location>
        <position position="40"/>
    </location>
    <ligand>
        <name>Zn(2+)</name>
        <dbReference type="ChEBI" id="CHEBI:29105"/>
        <label>1</label>
        <note>catalytic</note>
    </ligand>
</feature>
<feature type="binding site" evidence="1">
    <location>
        <position position="62"/>
    </location>
    <ligand>
        <name>Zn(2+)</name>
        <dbReference type="ChEBI" id="CHEBI:29105"/>
        <label>1</label>
        <note>catalytic</note>
    </ligand>
</feature>
<feature type="binding site" evidence="1">
    <location>
        <position position="98"/>
    </location>
    <ligand>
        <name>Zn(2+)</name>
        <dbReference type="ChEBI" id="CHEBI:29105"/>
        <label>2</label>
    </ligand>
</feature>
<feature type="binding site" evidence="1">
    <location>
        <position position="101"/>
    </location>
    <ligand>
        <name>Zn(2+)</name>
        <dbReference type="ChEBI" id="CHEBI:29105"/>
        <label>2</label>
    </ligand>
</feature>
<feature type="binding site" evidence="1">
    <location>
        <position position="104"/>
    </location>
    <ligand>
        <name>Zn(2+)</name>
        <dbReference type="ChEBI" id="CHEBI:29105"/>
        <label>2</label>
    </ligand>
</feature>
<feature type="binding site" evidence="1">
    <location>
        <position position="170"/>
    </location>
    <ligand>
        <name>Zn(2+)</name>
        <dbReference type="ChEBI" id="CHEBI:29105"/>
        <label>1</label>
        <note>catalytic</note>
    </ligand>
</feature>
<protein>
    <recommendedName>
        <fullName>5-exo-hydroxycamphor dehydrogenase</fullName>
        <ecNumber>1.1.1.327</ecNumber>
    </recommendedName>
    <alternativeName>
        <fullName>FDEH</fullName>
    </alternativeName>
</protein>
<evidence type="ECO:0000250" key="1"/>
<evidence type="ECO:0000269" key="2">
    <source>
    </source>
</evidence>
<evidence type="ECO:0000305" key="3"/>
<name>FDEH_PSEPU</name>
<sequence length="361" mass="38460">MQYARAAVMVEQNRVETWEVPIFDPAPGGALVRVVLGGVCGSDVHIVSGEAGAMPFPIILGHEGIGRIEKLGTGVTTDYAGVPVKQGDMVYWAPIALCHRCHSCTVLDETPWDNSTFFEHAQKPNWGSYADFACLPNGMAFYRLPDHAQPEALAALGCALPTVLRGYDRCGPVGLDDTVVVQGAGPVGLAAVLVAAASGAKDIIAIDHSPIRLDMARSLGATETISLADTTPEERQRIVQERFGKRGASLVVEAAGALPAFPEGVNLTGNHGRYVILGLWGAIGTQPISPRDLTIKNMSIAGATFPKPKHYYQAMQLAARLQDRYPLADLITQRFSIDEASKALELVKAGALIKPVIDSTL</sequence>
<reference key="1">
    <citation type="journal article" date="1993" name="Biochim. Biophys. Acta">
        <title>Complete nucleotide sequence of the 5-exo-hydroxycamphor dehydrogenase gene on the CAM plasmid of Pseudomonas putida (ATCC 17453).</title>
        <authorList>
            <person name="Aramaki H."/>
            <person name="Koga H."/>
            <person name="Sagara Y."/>
            <person name="Hosoi M."/>
            <person name="Horiuchi T."/>
        </authorList>
    </citation>
    <scope>NUCLEOTIDE SEQUENCE [GENOMIC DNA]</scope>
    <scope>SEQUENCE REVISION TO 97-100</scope>
    <source>
        <strain>G1 / ATCC 17453</strain>
    </source>
</reference>
<reference key="2">
    <citation type="journal article" date="1986" name="J. Bacteriol.">
        <title>camR, a negative regulator locus of the cytochrome P-450cam hydroxylase operon.</title>
        <authorList>
            <person name="Koga H."/>
            <person name="Aramaki H."/>
            <person name="Yamaguchi E."/>
            <person name="Takeuchi K."/>
            <person name="Horiuchi T."/>
            <person name="Gunsalus I.C."/>
        </authorList>
    </citation>
    <scope>NUCLEOTIDE SEQUENCE [GENOMIC DNA] OF 1-100</scope>
    <scope>PROTEIN SEQUENCE OF 1-45</scope>
    <source>
        <strain>G1 / ATCC 17453</strain>
    </source>
</reference>
<reference key="3">
    <citation type="journal article" date="1973" name="Proc. Natl. Acad. Sci. U.S.A.">
        <title>A transmissible plasmid controlling camphor oxidation in Pseudomonas putida.</title>
        <authorList>
            <person name="Rheinwald J.G."/>
            <person name="Chakrabarty A.M."/>
            <person name="Gunsalus I.C."/>
        </authorList>
    </citation>
    <scope>CATALYTIC ACTIVITY</scope>
</reference>
<keyword id="KW-0903">Direct protein sequencing</keyword>
<keyword id="KW-0479">Metal-binding</keyword>
<keyword id="KW-0520">NAD</keyword>
<keyword id="KW-0560">Oxidoreductase</keyword>
<keyword id="KW-0862">Zinc</keyword>
<organism>
    <name type="scientific">Pseudomonas putida</name>
    <name type="common">Arthrobacter siderocapsulatus</name>
    <dbReference type="NCBI Taxonomy" id="303"/>
    <lineage>
        <taxon>Bacteria</taxon>
        <taxon>Pseudomonadati</taxon>
        <taxon>Pseudomonadota</taxon>
        <taxon>Gammaproteobacteria</taxon>
        <taxon>Pseudomonadales</taxon>
        <taxon>Pseudomonadaceae</taxon>
        <taxon>Pseudomonas</taxon>
    </lineage>
</organism>
<proteinExistence type="evidence at protein level"/>
<gene>
    <name type="primary">camD</name>
</gene>
<dbReference type="EC" id="1.1.1.327"/>
<dbReference type="EMBL" id="D14680">
    <property type="protein sequence ID" value="BAA03511.1"/>
    <property type="molecule type" value="Genomic_DNA"/>
</dbReference>
<dbReference type="EMBL" id="M13471">
    <property type="protein sequence ID" value="AAA25762.1"/>
    <property type="status" value="ALT_SEQ"/>
    <property type="molecule type" value="Genomic_DNA"/>
</dbReference>
<dbReference type="PIR" id="S34613">
    <property type="entry name" value="S34613"/>
</dbReference>
<dbReference type="SMR" id="P09347"/>
<dbReference type="KEGG" id="ag:BAA03511"/>
<dbReference type="BioCyc" id="MetaCyc:MONOMER-3022"/>
<dbReference type="BRENDA" id="1.1.1.327">
    <property type="organism ID" value="5092"/>
</dbReference>
<dbReference type="UniPathway" id="UPA00719"/>
<dbReference type="GO" id="GO:0018452">
    <property type="term" value="F:5-exo-hydroxycamphor dehydrogenase activity"/>
    <property type="evidence" value="ECO:0007669"/>
    <property type="project" value="UniProtKB-EC"/>
</dbReference>
<dbReference type="GO" id="GO:0008270">
    <property type="term" value="F:zinc ion binding"/>
    <property type="evidence" value="ECO:0007669"/>
    <property type="project" value="InterPro"/>
</dbReference>
<dbReference type="GO" id="GO:0019383">
    <property type="term" value="P:(+)-camphor catabolic process"/>
    <property type="evidence" value="ECO:0007669"/>
    <property type="project" value="UniProtKB-UniPathway"/>
</dbReference>
<dbReference type="CDD" id="cd08231">
    <property type="entry name" value="MDR_TM0436_like"/>
    <property type="match status" value="1"/>
</dbReference>
<dbReference type="Gene3D" id="3.90.180.10">
    <property type="entry name" value="Medium-chain alcohol dehydrogenases, catalytic domain"/>
    <property type="match status" value="1"/>
</dbReference>
<dbReference type="Gene3D" id="3.40.50.720">
    <property type="entry name" value="NAD(P)-binding Rossmann-like Domain"/>
    <property type="match status" value="1"/>
</dbReference>
<dbReference type="InterPro" id="IPR013149">
    <property type="entry name" value="ADH-like_C"/>
</dbReference>
<dbReference type="InterPro" id="IPR013154">
    <property type="entry name" value="ADH-like_N"/>
</dbReference>
<dbReference type="InterPro" id="IPR002328">
    <property type="entry name" value="ADH_Zn_CS"/>
</dbReference>
<dbReference type="InterPro" id="IPR011032">
    <property type="entry name" value="GroES-like_sf"/>
</dbReference>
<dbReference type="InterPro" id="IPR036291">
    <property type="entry name" value="NAD(P)-bd_dom_sf"/>
</dbReference>
<dbReference type="InterPro" id="IPR020843">
    <property type="entry name" value="PKS_ER"/>
</dbReference>
<dbReference type="InterPro" id="IPR050129">
    <property type="entry name" value="Zn_alcohol_dh"/>
</dbReference>
<dbReference type="PANTHER" id="PTHR43401:SF1">
    <property type="entry name" value="ENOYL REDUCTASE (ER) DOMAIN-CONTAINING PROTEIN"/>
    <property type="match status" value="1"/>
</dbReference>
<dbReference type="PANTHER" id="PTHR43401">
    <property type="entry name" value="L-THREONINE 3-DEHYDROGENASE"/>
    <property type="match status" value="1"/>
</dbReference>
<dbReference type="Pfam" id="PF08240">
    <property type="entry name" value="ADH_N"/>
    <property type="match status" value="1"/>
</dbReference>
<dbReference type="Pfam" id="PF00107">
    <property type="entry name" value="ADH_zinc_N"/>
    <property type="match status" value="1"/>
</dbReference>
<dbReference type="SMART" id="SM00829">
    <property type="entry name" value="PKS_ER"/>
    <property type="match status" value="1"/>
</dbReference>
<dbReference type="SUPFAM" id="SSF50129">
    <property type="entry name" value="GroES-like"/>
    <property type="match status" value="1"/>
</dbReference>
<dbReference type="SUPFAM" id="SSF51735">
    <property type="entry name" value="NAD(P)-binding Rossmann-fold domains"/>
    <property type="match status" value="1"/>
</dbReference>
<dbReference type="PROSITE" id="PS00059">
    <property type="entry name" value="ADH_ZINC"/>
    <property type="match status" value="1"/>
</dbReference>